<sequence length="211" mass="21301">MQAILAAAMAAQTLLFSATAPPASLFQSPSSARPFHSLRLAAGPAGAAAARALVVADATKKAVAVLKGTSQVEGVVTLTQDDQGPTTVNVRVTGLTPGLHGFHLHEFGDTTNGCISTGPHFNPNNLTHGAPEDEVRHAGDLGNIVANAEGVAEATIVDKQIPLSGPNSVVGRAFVVHELEDDLGKGGHELSLSTGNAGGRLACGVVGLTPL</sequence>
<name>SODCP_ORYSJ</name>
<proteinExistence type="evidence at protein level"/>
<feature type="transit peptide" description="Chloroplast" evidence="2">
    <location>
        <begin position="1"/>
        <end position="57"/>
    </location>
</feature>
<feature type="chain" id="PRO_0000032847" description="Superoxide dismutase [Cu-Zn], chloroplastic">
    <location>
        <begin position="58"/>
        <end position="211"/>
    </location>
</feature>
<feature type="binding site" evidence="1">
    <location>
        <position position="103"/>
    </location>
    <ligand>
        <name>Cu cation</name>
        <dbReference type="ChEBI" id="CHEBI:23378"/>
        <note>catalytic</note>
    </ligand>
</feature>
<feature type="binding site" evidence="1">
    <location>
        <position position="105"/>
    </location>
    <ligand>
        <name>Cu cation</name>
        <dbReference type="ChEBI" id="CHEBI:23378"/>
        <note>catalytic</note>
    </ligand>
</feature>
<feature type="binding site" evidence="1">
    <location>
        <position position="120"/>
    </location>
    <ligand>
        <name>Cu cation</name>
        <dbReference type="ChEBI" id="CHEBI:23378"/>
        <note>catalytic</note>
    </ligand>
</feature>
<feature type="binding site" evidence="1">
    <location>
        <position position="120"/>
    </location>
    <ligand>
        <name>Zn(2+)</name>
        <dbReference type="ChEBI" id="CHEBI:29105"/>
        <note>structural</note>
    </ligand>
</feature>
<feature type="binding site" evidence="1">
    <location>
        <position position="128"/>
    </location>
    <ligand>
        <name>Zn(2+)</name>
        <dbReference type="ChEBI" id="CHEBI:29105"/>
        <note>structural</note>
    </ligand>
</feature>
<feature type="binding site" evidence="1">
    <location>
        <position position="137"/>
    </location>
    <ligand>
        <name>Zn(2+)</name>
        <dbReference type="ChEBI" id="CHEBI:29105"/>
        <note>structural</note>
    </ligand>
</feature>
<feature type="binding site" evidence="1">
    <location>
        <position position="140"/>
    </location>
    <ligand>
        <name>Zn(2+)</name>
        <dbReference type="ChEBI" id="CHEBI:29105"/>
        <note>structural</note>
    </ligand>
</feature>
<feature type="binding site" evidence="1">
    <location>
        <position position="177"/>
    </location>
    <ligand>
        <name>Cu cation</name>
        <dbReference type="ChEBI" id="CHEBI:23378"/>
        <note>catalytic</note>
    </ligand>
</feature>
<feature type="disulfide bond" evidence="1">
    <location>
        <begin position="114"/>
        <end position="203"/>
    </location>
</feature>
<keyword id="KW-0049">Antioxidant</keyword>
<keyword id="KW-0150">Chloroplast</keyword>
<keyword id="KW-0186">Copper</keyword>
<keyword id="KW-0903">Direct protein sequencing</keyword>
<keyword id="KW-1015">Disulfide bond</keyword>
<keyword id="KW-0479">Metal-binding</keyword>
<keyword id="KW-0560">Oxidoreductase</keyword>
<keyword id="KW-0934">Plastid</keyword>
<keyword id="KW-1185">Reference proteome</keyword>
<keyword id="KW-0809">Transit peptide</keyword>
<keyword id="KW-0862">Zinc</keyword>
<gene>
    <name type="primary">SODCP</name>
    <name type="ordered locus">Os08g0561700</name>
    <name type="ordered locus">LOC_Os08g44770</name>
    <name type="ORF">P0543D10.3</name>
    <name type="ORF">P0604E01.43</name>
</gene>
<comment type="function">
    <text>Destroys radicals which are normally produced within the cells and which are toxic to biological systems.</text>
</comment>
<comment type="catalytic activity">
    <reaction>
        <text>2 superoxide + 2 H(+) = H2O2 + O2</text>
        <dbReference type="Rhea" id="RHEA:20696"/>
        <dbReference type="ChEBI" id="CHEBI:15378"/>
        <dbReference type="ChEBI" id="CHEBI:15379"/>
        <dbReference type="ChEBI" id="CHEBI:16240"/>
        <dbReference type="ChEBI" id="CHEBI:18421"/>
        <dbReference type="EC" id="1.15.1.1"/>
    </reaction>
</comment>
<comment type="cofactor">
    <cofactor evidence="1">
        <name>Cu cation</name>
        <dbReference type="ChEBI" id="CHEBI:23378"/>
    </cofactor>
    <text evidence="1">Binds 1 copper ion per subunit.</text>
</comment>
<comment type="cofactor">
    <cofactor evidence="1">
        <name>Zn(2+)</name>
        <dbReference type="ChEBI" id="CHEBI:29105"/>
    </cofactor>
    <text evidence="1">Binds 1 zinc ion per subunit.</text>
</comment>
<comment type="subunit">
    <text evidence="1">Homotetramer.</text>
</comment>
<comment type="subcellular location">
    <subcellularLocation>
        <location>Plastid</location>
        <location>Chloroplast</location>
    </subcellularLocation>
</comment>
<comment type="similarity">
    <text evidence="3">Belongs to the Cu-Zn superoxide dismutase family.</text>
</comment>
<comment type="sequence caution" evidence="3">
    <conflict type="erroneous gene model prediction">
        <sequence resource="EMBL-CDS" id="BAD09607"/>
    </conflict>
</comment>
<comment type="sequence caution" evidence="3">
    <conflict type="erroneous gene model prediction">
        <sequence resource="EMBL-CDS" id="BAD13222"/>
    </conflict>
</comment>
<organism>
    <name type="scientific">Oryza sativa subsp. japonica</name>
    <name type="common">Rice</name>
    <dbReference type="NCBI Taxonomy" id="39947"/>
    <lineage>
        <taxon>Eukaryota</taxon>
        <taxon>Viridiplantae</taxon>
        <taxon>Streptophyta</taxon>
        <taxon>Embryophyta</taxon>
        <taxon>Tracheophyta</taxon>
        <taxon>Spermatophyta</taxon>
        <taxon>Magnoliopsida</taxon>
        <taxon>Liliopsida</taxon>
        <taxon>Poales</taxon>
        <taxon>Poaceae</taxon>
        <taxon>BOP clade</taxon>
        <taxon>Oryzoideae</taxon>
        <taxon>Oryzeae</taxon>
        <taxon>Oryzinae</taxon>
        <taxon>Oryza</taxon>
        <taxon>Oryza sativa</taxon>
    </lineage>
</organism>
<evidence type="ECO:0000250" key="1"/>
<evidence type="ECO:0000269" key="2">
    <source>
    </source>
</evidence>
<evidence type="ECO:0000305" key="3"/>
<dbReference type="EC" id="1.15.1.1"/>
<dbReference type="EMBL" id="D85239">
    <property type="protein sequence ID" value="BAA12745.1"/>
    <property type="molecule type" value="mRNA"/>
</dbReference>
<dbReference type="EMBL" id="AB026724">
    <property type="protein sequence ID" value="BAB21760.1"/>
    <property type="molecule type" value="Genomic_DNA"/>
</dbReference>
<dbReference type="EMBL" id="AP004587">
    <property type="protein sequence ID" value="BAD09607.1"/>
    <property type="status" value="ALT_SEQ"/>
    <property type="molecule type" value="Genomic_DNA"/>
</dbReference>
<dbReference type="EMBL" id="AP005544">
    <property type="protein sequence ID" value="BAD13222.1"/>
    <property type="status" value="ALT_SEQ"/>
    <property type="molecule type" value="Genomic_DNA"/>
</dbReference>
<dbReference type="EMBL" id="AP008214">
    <property type="protein sequence ID" value="BAF24428.1"/>
    <property type="molecule type" value="Genomic_DNA"/>
</dbReference>
<dbReference type="EMBL" id="AP014964">
    <property type="protein sequence ID" value="BAT06708.1"/>
    <property type="molecule type" value="Genomic_DNA"/>
</dbReference>
<dbReference type="EMBL" id="AK059841">
    <property type="protein sequence ID" value="BAG87162.1"/>
    <property type="molecule type" value="mRNA"/>
</dbReference>
<dbReference type="EMBL" id="AK068627">
    <property type="protein sequence ID" value="BAG90999.1"/>
    <property type="molecule type" value="mRNA"/>
</dbReference>
<dbReference type="EMBL" id="AK104013">
    <property type="protein sequence ID" value="BAG96371.1"/>
    <property type="molecule type" value="mRNA"/>
</dbReference>
<dbReference type="PIR" id="T03685">
    <property type="entry name" value="T03685"/>
</dbReference>
<dbReference type="RefSeq" id="XP_015649518.1">
    <property type="nucleotide sequence ID" value="XM_015794032.1"/>
</dbReference>
<dbReference type="SMR" id="P93407"/>
<dbReference type="FunCoup" id="P93407">
    <property type="interactions" value="1612"/>
</dbReference>
<dbReference type="STRING" id="39947.P93407"/>
<dbReference type="PaxDb" id="39947-P93407"/>
<dbReference type="EnsemblPlants" id="Os08t0561700-01">
    <property type="protein sequence ID" value="Os08t0561700-01"/>
    <property type="gene ID" value="Os08g0561700"/>
</dbReference>
<dbReference type="Gramene" id="Os08t0561700-01">
    <property type="protein sequence ID" value="Os08t0561700-01"/>
    <property type="gene ID" value="Os08g0561700"/>
</dbReference>
<dbReference type="KEGG" id="dosa:Os08g0561700"/>
<dbReference type="eggNOG" id="KOG0441">
    <property type="taxonomic scope" value="Eukaryota"/>
</dbReference>
<dbReference type="HOGENOM" id="CLU_056632_1_0_1"/>
<dbReference type="InParanoid" id="P93407"/>
<dbReference type="OMA" id="AVHAFIV"/>
<dbReference type="OrthoDB" id="2015551at2759"/>
<dbReference type="PlantReactome" id="R-OSA-1119403">
    <property type="pathway name" value="Removal of superoxide radicals"/>
</dbReference>
<dbReference type="Proteomes" id="UP000000763">
    <property type="component" value="Chromosome 8"/>
</dbReference>
<dbReference type="Proteomes" id="UP000059680">
    <property type="component" value="Chromosome 8"/>
</dbReference>
<dbReference type="GO" id="GO:0009507">
    <property type="term" value="C:chloroplast"/>
    <property type="evidence" value="ECO:0007669"/>
    <property type="project" value="UniProtKB-SubCell"/>
</dbReference>
<dbReference type="GO" id="GO:0005507">
    <property type="term" value="F:copper ion binding"/>
    <property type="evidence" value="ECO:0000318"/>
    <property type="project" value="GO_Central"/>
</dbReference>
<dbReference type="GO" id="GO:0004784">
    <property type="term" value="F:superoxide dismutase activity"/>
    <property type="evidence" value="ECO:0000318"/>
    <property type="project" value="GO_Central"/>
</dbReference>
<dbReference type="GO" id="GO:0019430">
    <property type="term" value="P:removal of superoxide radicals"/>
    <property type="evidence" value="ECO:0000318"/>
    <property type="project" value="GO_Central"/>
</dbReference>
<dbReference type="CDD" id="cd00305">
    <property type="entry name" value="Cu-Zn_Superoxide_Dismutase"/>
    <property type="match status" value="1"/>
</dbReference>
<dbReference type="FunFam" id="2.60.40.200:FF:000003">
    <property type="entry name" value="Superoxide dismutase [Cu-Zn], chloroplastic"/>
    <property type="match status" value="1"/>
</dbReference>
<dbReference type="Gene3D" id="2.60.40.200">
    <property type="entry name" value="Superoxide dismutase, copper/zinc binding domain"/>
    <property type="match status" value="1"/>
</dbReference>
<dbReference type="InterPro" id="IPR036423">
    <property type="entry name" value="SOD-like_Cu/Zn_dom_sf"/>
</dbReference>
<dbReference type="InterPro" id="IPR024134">
    <property type="entry name" value="SOD_Cu/Zn_/chaperone"/>
</dbReference>
<dbReference type="InterPro" id="IPR018152">
    <property type="entry name" value="SOD_Cu/Zn_BS"/>
</dbReference>
<dbReference type="InterPro" id="IPR001424">
    <property type="entry name" value="SOD_Cu_Zn_dom"/>
</dbReference>
<dbReference type="PANTHER" id="PTHR10003">
    <property type="entry name" value="SUPEROXIDE DISMUTASE CU-ZN -RELATED"/>
    <property type="match status" value="1"/>
</dbReference>
<dbReference type="Pfam" id="PF00080">
    <property type="entry name" value="Sod_Cu"/>
    <property type="match status" value="1"/>
</dbReference>
<dbReference type="PRINTS" id="PR00068">
    <property type="entry name" value="CUZNDISMTASE"/>
</dbReference>
<dbReference type="SUPFAM" id="SSF49329">
    <property type="entry name" value="Cu,Zn superoxide dismutase-like"/>
    <property type="match status" value="1"/>
</dbReference>
<dbReference type="PROSITE" id="PS00087">
    <property type="entry name" value="SOD_CU_ZN_1"/>
    <property type="match status" value="1"/>
</dbReference>
<dbReference type="PROSITE" id="PS00332">
    <property type="entry name" value="SOD_CU_ZN_2"/>
    <property type="match status" value="1"/>
</dbReference>
<reference key="1">
    <citation type="journal article" date="1997" name="Plant Cell Physiol.">
        <title>Molecular cloning and characterization of a cDNA for plastidic copper/zinc-superoxide dismutase in rice (Oryza sativa L.).</title>
        <authorList>
            <person name="Kaminaka H."/>
            <person name="Morita S."/>
            <person name="Yokoi H."/>
            <person name="Masumura T."/>
            <person name="Tanaka K."/>
        </authorList>
    </citation>
    <scope>NUCLEOTIDE SEQUENCE [MRNA]</scope>
    <source>
        <strain>cv. Nipponbare</strain>
        <tissue>Leaf</tissue>
    </source>
</reference>
<reference key="2">
    <citation type="submission" date="1999-04" db="EMBL/GenBank/DDBJ databases">
        <title>Gene cloning of rice plastidic copper/zinc-superoxide dismutase.</title>
        <authorList>
            <person name="Kaminaka H."/>
            <person name="Morita S."/>
            <person name="Tokumoto M."/>
            <person name="Tanaka K."/>
        </authorList>
    </citation>
    <scope>NUCLEOTIDE SEQUENCE [GENOMIC DNA]</scope>
    <source>
        <strain>cv. Nipponbare</strain>
    </source>
</reference>
<reference key="3">
    <citation type="journal article" date="2005" name="Nature">
        <title>The map-based sequence of the rice genome.</title>
        <authorList>
            <consortium name="International rice genome sequencing project (IRGSP)"/>
        </authorList>
    </citation>
    <scope>NUCLEOTIDE SEQUENCE [LARGE SCALE GENOMIC DNA]</scope>
    <source>
        <strain>cv. Nipponbare</strain>
    </source>
</reference>
<reference key="4">
    <citation type="journal article" date="2008" name="Nucleic Acids Res.">
        <title>The rice annotation project database (RAP-DB): 2008 update.</title>
        <authorList>
            <consortium name="The rice annotation project (RAP)"/>
        </authorList>
    </citation>
    <scope>GENOME REANNOTATION</scope>
    <source>
        <strain>cv. Nipponbare</strain>
    </source>
</reference>
<reference key="5">
    <citation type="journal article" date="2013" name="Rice">
        <title>Improvement of the Oryza sativa Nipponbare reference genome using next generation sequence and optical map data.</title>
        <authorList>
            <person name="Kawahara Y."/>
            <person name="de la Bastide M."/>
            <person name="Hamilton J.P."/>
            <person name="Kanamori H."/>
            <person name="McCombie W.R."/>
            <person name="Ouyang S."/>
            <person name="Schwartz D.C."/>
            <person name="Tanaka T."/>
            <person name="Wu J."/>
            <person name="Zhou S."/>
            <person name="Childs K.L."/>
            <person name="Davidson R.M."/>
            <person name="Lin H."/>
            <person name="Quesada-Ocampo L."/>
            <person name="Vaillancourt B."/>
            <person name="Sakai H."/>
            <person name="Lee S.S."/>
            <person name="Kim J."/>
            <person name="Numa H."/>
            <person name="Itoh T."/>
            <person name="Buell C.R."/>
            <person name="Matsumoto T."/>
        </authorList>
    </citation>
    <scope>GENOME REANNOTATION</scope>
    <source>
        <strain>cv. Nipponbare</strain>
    </source>
</reference>
<reference key="6">
    <citation type="journal article" date="2003" name="Science">
        <title>Collection, mapping, and annotation of over 28,000 cDNA clones from japonica rice.</title>
        <authorList>
            <consortium name="The rice full-length cDNA consortium"/>
        </authorList>
    </citation>
    <scope>NUCLEOTIDE SEQUENCE [LARGE SCALE MRNA]</scope>
    <source>
        <strain>cv. Nipponbare</strain>
    </source>
</reference>
<reference key="7">
    <citation type="journal article" date="2004" name="Nucleic Acids Res.">
        <title>Rice proteome database based on two-dimensional polyacrylamide gel electrophoresis: its status in 2003.</title>
        <authorList>
            <person name="Komatsu S."/>
            <person name="Kojima K."/>
            <person name="Suzuki K."/>
            <person name="Ozaki K."/>
            <person name="Higo K."/>
        </authorList>
    </citation>
    <scope>PROTEIN SEQUENCE OF 58-67</scope>
    <source>
        <strain>cv. Nipponbare</strain>
        <tissue>Leaf</tissue>
        <tissue>Panicle</tissue>
        <tissue>Sheath</tissue>
    </source>
</reference>
<protein>
    <recommendedName>
        <fullName>Superoxide dismutase [Cu-Zn], chloroplastic</fullName>
        <ecNumber>1.15.1.1</ecNumber>
    </recommendedName>
</protein>
<accession>P93407</accession>
<accession>Q0J3N7</accession>
<accession>Q6YYW6</accession>
<accession>Q76MX3</accession>